<accession>P0CO37</accession>
<accession>Q55U67</accession>
<accession>Q5KI78</accession>
<gene>
    <name type="primary">ISY1</name>
    <name type="ordered locus">CNBD2390</name>
</gene>
<feature type="chain" id="PRO_0000410123" description="Pre-mRNA-splicing factor ISY1">
    <location>
        <begin position="1"/>
        <end position="348"/>
    </location>
</feature>
<feature type="region of interest" description="Disordered" evidence="2">
    <location>
        <begin position="220"/>
        <end position="282"/>
    </location>
</feature>
<feature type="compositionally biased region" description="Basic and acidic residues" evidence="2">
    <location>
        <begin position="264"/>
        <end position="278"/>
    </location>
</feature>
<keyword id="KW-0963">Cytoplasm</keyword>
<keyword id="KW-0507">mRNA processing</keyword>
<keyword id="KW-0508">mRNA splicing</keyword>
<keyword id="KW-0539">Nucleus</keyword>
<keyword id="KW-0747">Spliceosome</keyword>
<proteinExistence type="inferred from homology"/>
<evidence type="ECO:0000250" key="1"/>
<evidence type="ECO:0000256" key="2">
    <source>
        <dbReference type="SAM" id="MobiDB-lite"/>
    </source>
</evidence>
<evidence type="ECO:0000305" key="3"/>
<name>ISY1_CRYNB</name>
<dbReference type="EMBL" id="AAEY01000020">
    <property type="protein sequence ID" value="EAL21182.1"/>
    <property type="molecule type" value="Genomic_DNA"/>
</dbReference>
<dbReference type="RefSeq" id="XP_775829.1">
    <property type="nucleotide sequence ID" value="XM_770736.1"/>
</dbReference>
<dbReference type="SMR" id="P0CO37"/>
<dbReference type="EnsemblFungi" id="AAW43321">
    <property type="protein sequence ID" value="AAW43321"/>
    <property type="gene ID" value="CND03910"/>
</dbReference>
<dbReference type="GeneID" id="4935628"/>
<dbReference type="KEGG" id="cnb:CNBD2390"/>
<dbReference type="VEuPathDB" id="FungiDB:CNBD2390"/>
<dbReference type="HOGENOM" id="CLU_043453_0_1_1"/>
<dbReference type="OrthoDB" id="4142at5206"/>
<dbReference type="GO" id="GO:0005737">
    <property type="term" value="C:cytoplasm"/>
    <property type="evidence" value="ECO:0007669"/>
    <property type="project" value="UniProtKB-SubCell"/>
</dbReference>
<dbReference type="GO" id="GO:0005681">
    <property type="term" value="C:spliceosomal complex"/>
    <property type="evidence" value="ECO:0007669"/>
    <property type="project" value="UniProtKB-KW"/>
</dbReference>
<dbReference type="GO" id="GO:0000350">
    <property type="term" value="P:generation of catalytic spliceosome for second transesterification step"/>
    <property type="evidence" value="ECO:0007669"/>
    <property type="project" value="InterPro"/>
</dbReference>
<dbReference type="FunFam" id="1.10.287.660:FF:000001">
    <property type="entry name" value="pre-mRNA-splicing factor ISY1 homolog"/>
    <property type="match status" value="1"/>
</dbReference>
<dbReference type="Gene3D" id="1.10.287.660">
    <property type="entry name" value="Helix hairpin bin"/>
    <property type="match status" value="1"/>
</dbReference>
<dbReference type="InterPro" id="IPR029012">
    <property type="entry name" value="Helix_hairpin_bin_sf"/>
</dbReference>
<dbReference type="InterPro" id="IPR009360">
    <property type="entry name" value="Isy1"/>
</dbReference>
<dbReference type="InterPro" id="IPR037200">
    <property type="entry name" value="Isy1_sf"/>
</dbReference>
<dbReference type="PANTHER" id="PTHR13021">
    <property type="entry name" value="PRE-MRNA-SPLICING FACTOR ISY1"/>
    <property type="match status" value="1"/>
</dbReference>
<dbReference type="Pfam" id="PF06246">
    <property type="entry name" value="Isy1"/>
    <property type="match status" value="1"/>
</dbReference>
<dbReference type="SUPFAM" id="SSF140102">
    <property type="entry name" value="ISY1 domain-like"/>
    <property type="match status" value="1"/>
</dbReference>
<protein>
    <recommendedName>
        <fullName>Pre-mRNA-splicing factor ISY1</fullName>
    </recommendedName>
</protein>
<sequence length="348" mass="39124">MARNSEKAQSMLYRFREQQAIDMGIGTRQKGDRRPRMASSCTSLREAERWRGDILRDISRKVSKIQDVALTDYQVRDLNDEINQLFREKRAWENQIINLGGANYRRAAGVMTDDEGREVPGTRGYKYFGRAKELPGVKELFTRSTQQATEESARTASFQMFRHQGPDYYGDEDELDKELIDTEDVEAREGWEDQVRKSASTLGISDETLLPRYPVSISSKLPDASVDPTQLQENEEAPQKSEKALKGTGKSKRKYKGVNDLEEGGQKEEQEEAKKSKTDTSVAINSVAEGQNIASETAVAAAQAQAAAFLGVLDAESLEFPTMPSKDEMAKVLLEVRKQALKEEYGVY</sequence>
<reference key="1">
    <citation type="journal article" date="2005" name="Science">
        <title>The genome of the basidiomycetous yeast and human pathogen Cryptococcus neoformans.</title>
        <authorList>
            <person name="Loftus B.J."/>
            <person name="Fung E."/>
            <person name="Roncaglia P."/>
            <person name="Rowley D."/>
            <person name="Amedeo P."/>
            <person name="Bruno D."/>
            <person name="Vamathevan J."/>
            <person name="Miranda M."/>
            <person name="Anderson I.J."/>
            <person name="Fraser J.A."/>
            <person name="Allen J.E."/>
            <person name="Bosdet I.E."/>
            <person name="Brent M.R."/>
            <person name="Chiu R."/>
            <person name="Doering T.L."/>
            <person name="Donlin M.J."/>
            <person name="D'Souza C.A."/>
            <person name="Fox D.S."/>
            <person name="Grinberg V."/>
            <person name="Fu J."/>
            <person name="Fukushima M."/>
            <person name="Haas B.J."/>
            <person name="Huang J.C."/>
            <person name="Janbon G."/>
            <person name="Jones S.J.M."/>
            <person name="Koo H.L."/>
            <person name="Krzywinski M.I."/>
            <person name="Kwon-Chung K.J."/>
            <person name="Lengeler K.B."/>
            <person name="Maiti R."/>
            <person name="Marra M.A."/>
            <person name="Marra R.E."/>
            <person name="Mathewson C.A."/>
            <person name="Mitchell T.G."/>
            <person name="Pertea M."/>
            <person name="Riggs F.R."/>
            <person name="Salzberg S.L."/>
            <person name="Schein J.E."/>
            <person name="Shvartsbeyn A."/>
            <person name="Shin H."/>
            <person name="Shumway M."/>
            <person name="Specht C.A."/>
            <person name="Suh B.B."/>
            <person name="Tenney A."/>
            <person name="Utterback T.R."/>
            <person name="Wickes B.L."/>
            <person name="Wortman J.R."/>
            <person name="Wye N.H."/>
            <person name="Kronstad J.W."/>
            <person name="Lodge J.K."/>
            <person name="Heitman J."/>
            <person name="Davis R.W."/>
            <person name="Fraser C.M."/>
            <person name="Hyman R.W."/>
        </authorList>
    </citation>
    <scope>NUCLEOTIDE SEQUENCE [LARGE SCALE GENOMIC DNA]</scope>
    <source>
        <strain>B-3501A</strain>
    </source>
</reference>
<comment type="function">
    <text evidence="1">Involved in pre-mRNA splicing.</text>
</comment>
<comment type="subunit">
    <text evidence="1">Associated with the spliceosome.</text>
</comment>
<comment type="subcellular location">
    <subcellularLocation>
        <location evidence="1">Cytoplasm</location>
    </subcellularLocation>
    <subcellularLocation>
        <location evidence="1">Nucleus</location>
    </subcellularLocation>
</comment>
<comment type="similarity">
    <text evidence="3">Belongs to the ISY1 family.</text>
</comment>
<organism>
    <name type="scientific">Cryptococcus neoformans var. neoformans serotype D (strain B-3501A)</name>
    <name type="common">Filobasidiella neoformans</name>
    <dbReference type="NCBI Taxonomy" id="283643"/>
    <lineage>
        <taxon>Eukaryota</taxon>
        <taxon>Fungi</taxon>
        <taxon>Dikarya</taxon>
        <taxon>Basidiomycota</taxon>
        <taxon>Agaricomycotina</taxon>
        <taxon>Tremellomycetes</taxon>
        <taxon>Tremellales</taxon>
        <taxon>Cryptococcaceae</taxon>
        <taxon>Cryptococcus</taxon>
        <taxon>Cryptococcus neoformans species complex</taxon>
    </lineage>
</organism>